<feature type="chain" id="PRO_1000132768" description="Chorismate synthase">
    <location>
        <begin position="1"/>
        <end position="366"/>
    </location>
</feature>
<feature type="binding site" evidence="1">
    <location>
        <position position="48"/>
    </location>
    <ligand>
        <name>NADP(+)</name>
        <dbReference type="ChEBI" id="CHEBI:58349"/>
    </ligand>
</feature>
<feature type="binding site" evidence="1">
    <location>
        <position position="54"/>
    </location>
    <ligand>
        <name>NADP(+)</name>
        <dbReference type="ChEBI" id="CHEBI:58349"/>
    </ligand>
</feature>
<feature type="binding site" evidence="1">
    <location>
        <begin position="125"/>
        <end position="127"/>
    </location>
    <ligand>
        <name>FMN</name>
        <dbReference type="ChEBI" id="CHEBI:58210"/>
    </ligand>
</feature>
<feature type="binding site" evidence="1">
    <location>
        <begin position="237"/>
        <end position="238"/>
    </location>
    <ligand>
        <name>FMN</name>
        <dbReference type="ChEBI" id="CHEBI:58210"/>
    </ligand>
</feature>
<feature type="binding site" evidence="1">
    <location>
        <position position="277"/>
    </location>
    <ligand>
        <name>FMN</name>
        <dbReference type="ChEBI" id="CHEBI:58210"/>
    </ligand>
</feature>
<feature type="binding site" evidence="1">
    <location>
        <begin position="292"/>
        <end position="296"/>
    </location>
    <ligand>
        <name>FMN</name>
        <dbReference type="ChEBI" id="CHEBI:58210"/>
    </ligand>
</feature>
<feature type="binding site" evidence="1">
    <location>
        <position position="318"/>
    </location>
    <ligand>
        <name>FMN</name>
        <dbReference type="ChEBI" id="CHEBI:58210"/>
    </ligand>
</feature>
<organism>
    <name type="scientific">Acidovorax ebreus (strain TPSY)</name>
    <name type="common">Diaphorobacter sp. (strain TPSY)</name>
    <dbReference type="NCBI Taxonomy" id="535289"/>
    <lineage>
        <taxon>Bacteria</taxon>
        <taxon>Pseudomonadati</taxon>
        <taxon>Pseudomonadota</taxon>
        <taxon>Betaproteobacteria</taxon>
        <taxon>Burkholderiales</taxon>
        <taxon>Comamonadaceae</taxon>
        <taxon>Diaphorobacter</taxon>
    </lineage>
</organism>
<protein>
    <recommendedName>
        <fullName evidence="1">Chorismate synthase</fullName>
        <shortName evidence="1">CS</shortName>
        <ecNumber evidence="1">4.2.3.5</ecNumber>
    </recommendedName>
    <alternativeName>
        <fullName evidence="1">5-enolpyruvylshikimate-3-phosphate phospholyase</fullName>
    </alternativeName>
</protein>
<keyword id="KW-0028">Amino-acid biosynthesis</keyword>
<keyword id="KW-0057">Aromatic amino acid biosynthesis</keyword>
<keyword id="KW-0274">FAD</keyword>
<keyword id="KW-0285">Flavoprotein</keyword>
<keyword id="KW-0288">FMN</keyword>
<keyword id="KW-0456">Lyase</keyword>
<keyword id="KW-0521">NADP</keyword>
<keyword id="KW-1185">Reference proteome</keyword>
<name>AROC_ACIET</name>
<proteinExistence type="inferred from homology"/>
<reference key="1">
    <citation type="submission" date="2009-01" db="EMBL/GenBank/DDBJ databases">
        <title>Complete sequence of Diaphorobacter sp. TPSY.</title>
        <authorList>
            <consortium name="US DOE Joint Genome Institute"/>
            <person name="Lucas S."/>
            <person name="Copeland A."/>
            <person name="Lapidus A."/>
            <person name="Glavina del Rio T."/>
            <person name="Tice H."/>
            <person name="Bruce D."/>
            <person name="Goodwin L."/>
            <person name="Pitluck S."/>
            <person name="Chertkov O."/>
            <person name="Brettin T."/>
            <person name="Detter J.C."/>
            <person name="Han C."/>
            <person name="Larimer F."/>
            <person name="Land M."/>
            <person name="Hauser L."/>
            <person name="Kyrpides N."/>
            <person name="Mikhailova N."/>
            <person name="Coates J.D."/>
        </authorList>
    </citation>
    <scope>NUCLEOTIDE SEQUENCE [LARGE SCALE GENOMIC DNA]</scope>
    <source>
        <strain>TPSY</strain>
    </source>
</reference>
<evidence type="ECO:0000255" key="1">
    <source>
        <dbReference type="HAMAP-Rule" id="MF_00300"/>
    </source>
</evidence>
<gene>
    <name evidence="1" type="primary">aroC</name>
    <name type="ordered locus">Dtpsy_2046</name>
</gene>
<sequence length="366" mass="38856">MSGNTLGTLFCVTNFGESHGPAIGCVIDGCPPGMELSEADIQADLDRRRPGTSRHVTQRNEPDAVEILSGVYEGKTTGTPIALLIRNTDQRSKDYGNIAQSFRPGHADYAYWHKYGLRDPRGGGRSSARLTAPTVAAGAVAKKWLAEKYGTRFRACMTQLGELPIPFENWEHVPHNPFFAPVADVQAYEDYMDALRKSGDSCGARIRVQATSVPVGLGEPLYDKLDADIAHVMMGLNAVKGVEIGAGFASVAQRGTTHGDSLTPTGFASNNAGGVLGGISTGQDIEVSLAIKPTSSIISPRESIDIHGQSTEVITKGRHDPCVGIRAAPIAEALLALVIMDHALRHRAQCGDVVQAVAPIPAVRLG</sequence>
<accession>B9MAD0</accession>
<dbReference type="EC" id="4.2.3.5" evidence="1"/>
<dbReference type="EMBL" id="CP001392">
    <property type="protein sequence ID" value="ACM33502.1"/>
    <property type="molecule type" value="Genomic_DNA"/>
</dbReference>
<dbReference type="RefSeq" id="WP_015913532.1">
    <property type="nucleotide sequence ID" value="NC_011992.1"/>
</dbReference>
<dbReference type="SMR" id="B9MAD0"/>
<dbReference type="KEGG" id="dia:Dtpsy_2046"/>
<dbReference type="eggNOG" id="COG0082">
    <property type="taxonomic scope" value="Bacteria"/>
</dbReference>
<dbReference type="HOGENOM" id="CLU_034547_0_2_4"/>
<dbReference type="UniPathway" id="UPA00053">
    <property type="reaction ID" value="UER00090"/>
</dbReference>
<dbReference type="Proteomes" id="UP000000450">
    <property type="component" value="Chromosome"/>
</dbReference>
<dbReference type="GO" id="GO:0005829">
    <property type="term" value="C:cytosol"/>
    <property type="evidence" value="ECO:0007669"/>
    <property type="project" value="TreeGrafter"/>
</dbReference>
<dbReference type="GO" id="GO:0004107">
    <property type="term" value="F:chorismate synthase activity"/>
    <property type="evidence" value="ECO:0007669"/>
    <property type="project" value="UniProtKB-UniRule"/>
</dbReference>
<dbReference type="GO" id="GO:0010181">
    <property type="term" value="F:FMN binding"/>
    <property type="evidence" value="ECO:0007669"/>
    <property type="project" value="TreeGrafter"/>
</dbReference>
<dbReference type="GO" id="GO:0008652">
    <property type="term" value="P:amino acid biosynthetic process"/>
    <property type="evidence" value="ECO:0007669"/>
    <property type="project" value="UniProtKB-KW"/>
</dbReference>
<dbReference type="GO" id="GO:0009073">
    <property type="term" value="P:aromatic amino acid family biosynthetic process"/>
    <property type="evidence" value="ECO:0007669"/>
    <property type="project" value="UniProtKB-KW"/>
</dbReference>
<dbReference type="GO" id="GO:0009423">
    <property type="term" value="P:chorismate biosynthetic process"/>
    <property type="evidence" value="ECO:0007669"/>
    <property type="project" value="UniProtKB-UniRule"/>
</dbReference>
<dbReference type="CDD" id="cd07304">
    <property type="entry name" value="Chorismate_synthase"/>
    <property type="match status" value="1"/>
</dbReference>
<dbReference type="Gene3D" id="3.60.150.10">
    <property type="entry name" value="Chorismate synthase AroC"/>
    <property type="match status" value="1"/>
</dbReference>
<dbReference type="HAMAP" id="MF_00300">
    <property type="entry name" value="Chorismate_synth"/>
    <property type="match status" value="1"/>
</dbReference>
<dbReference type="InterPro" id="IPR000453">
    <property type="entry name" value="Chorismate_synth"/>
</dbReference>
<dbReference type="InterPro" id="IPR035904">
    <property type="entry name" value="Chorismate_synth_AroC_sf"/>
</dbReference>
<dbReference type="InterPro" id="IPR020541">
    <property type="entry name" value="Chorismate_synthase_CS"/>
</dbReference>
<dbReference type="NCBIfam" id="TIGR00033">
    <property type="entry name" value="aroC"/>
    <property type="match status" value="1"/>
</dbReference>
<dbReference type="NCBIfam" id="NF003793">
    <property type="entry name" value="PRK05382.1"/>
    <property type="match status" value="1"/>
</dbReference>
<dbReference type="PANTHER" id="PTHR21085">
    <property type="entry name" value="CHORISMATE SYNTHASE"/>
    <property type="match status" value="1"/>
</dbReference>
<dbReference type="PANTHER" id="PTHR21085:SF0">
    <property type="entry name" value="CHORISMATE SYNTHASE"/>
    <property type="match status" value="1"/>
</dbReference>
<dbReference type="Pfam" id="PF01264">
    <property type="entry name" value="Chorismate_synt"/>
    <property type="match status" value="1"/>
</dbReference>
<dbReference type="PIRSF" id="PIRSF001456">
    <property type="entry name" value="Chorismate_synth"/>
    <property type="match status" value="1"/>
</dbReference>
<dbReference type="SUPFAM" id="SSF103263">
    <property type="entry name" value="Chorismate synthase, AroC"/>
    <property type="match status" value="1"/>
</dbReference>
<dbReference type="PROSITE" id="PS00787">
    <property type="entry name" value="CHORISMATE_SYNTHASE_1"/>
    <property type="match status" value="1"/>
</dbReference>
<dbReference type="PROSITE" id="PS00788">
    <property type="entry name" value="CHORISMATE_SYNTHASE_2"/>
    <property type="match status" value="1"/>
</dbReference>
<dbReference type="PROSITE" id="PS00789">
    <property type="entry name" value="CHORISMATE_SYNTHASE_3"/>
    <property type="match status" value="1"/>
</dbReference>
<comment type="function">
    <text evidence="1">Catalyzes the anti-1,4-elimination of the C-3 phosphate and the C-6 proR hydrogen from 5-enolpyruvylshikimate-3-phosphate (EPSP) to yield chorismate, which is the branch point compound that serves as the starting substrate for the three terminal pathways of aromatic amino acid biosynthesis. This reaction introduces a second double bond into the aromatic ring system.</text>
</comment>
<comment type="catalytic activity">
    <reaction evidence="1">
        <text>5-O-(1-carboxyvinyl)-3-phosphoshikimate = chorismate + phosphate</text>
        <dbReference type="Rhea" id="RHEA:21020"/>
        <dbReference type="ChEBI" id="CHEBI:29748"/>
        <dbReference type="ChEBI" id="CHEBI:43474"/>
        <dbReference type="ChEBI" id="CHEBI:57701"/>
        <dbReference type="EC" id="4.2.3.5"/>
    </reaction>
</comment>
<comment type="cofactor">
    <cofactor evidence="1">
        <name>FMNH2</name>
        <dbReference type="ChEBI" id="CHEBI:57618"/>
    </cofactor>
    <text evidence="1">Reduced FMN (FMNH(2)).</text>
</comment>
<comment type="pathway">
    <text evidence="1">Metabolic intermediate biosynthesis; chorismate biosynthesis; chorismate from D-erythrose 4-phosphate and phosphoenolpyruvate: step 7/7.</text>
</comment>
<comment type="subunit">
    <text evidence="1">Homotetramer.</text>
</comment>
<comment type="similarity">
    <text evidence="1">Belongs to the chorismate synthase family.</text>
</comment>